<protein>
    <recommendedName>
        <fullName evidence="1">ATP synthase subunit b</fullName>
    </recommendedName>
    <alternativeName>
        <fullName evidence="1">ATP synthase F(0) sector subunit b</fullName>
    </alternativeName>
    <alternativeName>
        <fullName evidence="1">ATPase subunit I</fullName>
    </alternativeName>
    <alternativeName>
        <fullName evidence="1">F-type ATPase subunit b</fullName>
        <shortName evidence="1">F-ATPase subunit b</shortName>
    </alternativeName>
</protein>
<proteinExistence type="inferred from homology"/>
<organism>
    <name type="scientific">Streptococcus pneumoniae (strain CGSP14)</name>
    <dbReference type="NCBI Taxonomy" id="516950"/>
    <lineage>
        <taxon>Bacteria</taxon>
        <taxon>Bacillati</taxon>
        <taxon>Bacillota</taxon>
        <taxon>Bacilli</taxon>
        <taxon>Lactobacillales</taxon>
        <taxon>Streptococcaceae</taxon>
        <taxon>Streptococcus</taxon>
    </lineage>
</organism>
<keyword id="KW-0066">ATP synthesis</keyword>
<keyword id="KW-1003">Cell membrane</keyword>
<keyword id="KW-0138">CF(0)</keyword>
<keyword id="KW-0375">Hydrogen ion transport</keyword>
<keyword id="KW-0406">Ion transport</keyword>
<keyword id="KW-0472">Membrane</keyword>
<keyword id="KW-0812">Transmembrane</keyword>
<keyword id="KW-1133">Transmembrane helix</keyword>
<keyword id="KW-0813">Transport</keyword>
<evidence type="ECO:0000255" key="1">
    <source>
        <dbReference type="HAMAP-Rule" id="MF_01398"/>
    </source>
</evidence>
<feature type="chain" id="PRO_0000368797" description="ATP synthase subunit b">
    <location>
        <begin position="1"/>
        <end position="164"/>
    </location>
</feature>
<feature type="transmembrane region" description="Helical" evidence="1">
    <location>
        <begin position="6"/>
        <end position="26"/>
    </location>
</feature>
<dbReference type="EMBL" id="CP001033">
    <property type="protein sequence ID" value="ACB90748.1"/>
    <property type="molecule type" value="Genomic_DNA"/>
</dbReference>
<dbReference type="RefSeq" id="WP_000558554.1">
    <property type="nucleotide sequence ID" value="NC_010582.1"/>
</dbReference>
<dbReference type="SMR" id="B2IQX4"/>
<dbReference type="GeneID" id="45653249"/>
<dbReference type="KEGG" id="spw:SPCG_1496"/>
<dbReference type="HOGENOM" id="CLU_079215_4_2_9"/>
<dbReference type="GO" id="GO:0005886">
    <property type="term" value="C:plasma membrane"/>
    <property type="evidence" value="ECO:0007669"/>
    <property type="project" value="UniProtKB-SubCell"/>
</dbReference>
<dbReference type="GO" id="GO:0045259">
    <property type="term" value="C:proton-transporting ATP synthase complex"/>
    <property type="evidence" value="ECO:0007669"/>
    <property type="project" value="UniProtKB-KW"/>
</dbReference>
<dbReference type="GO" id="GO:0046933">
    <property type="term" value="F:proton-transporting ATP synthase activity, rotational mechanism"/>
    <property type="evidence" value="ECO:0007669"/>
    <property type="project" value="UniProtKB-UniRule"/>
</dbReference>
<dbReference type="GO" id="GO:0046961">
    <property type="term" value="F:proton-transporting ATPase activity, rotational mechanism"/>
    <property type="evidence" value="ECO:0007669"/>
    <property type="project" value="TreeGrafter"/>
</dbReference>
<dbReference type="CDD" id="cd06503">
    <property type="entry name" value="ATP-synt_Fo_b"/>
    <property type="match status" value="1"/>
</dbReference>
<dbReference type="Gene3D" id="6.10.250.1580">
    <property type="match status" value="1"/>
</dbReference>
<dbReference type="HAMAP" id="MF_01398">
    <property type="entry name" value="ATP_synth_b_bprime"/>
    <property type="match status" value="1"/>
</dbReference>
<dbReference type="InterPro" id="IPR028987">
    <property type="entry name" value="ATP_synth_B-like_membr_sf"/>
</dbReference>
<dbReference type="InterPro" id="IPR002146">
    <property type="entry name" value="ATP_synth_b/b'su_bac/chlpt"/>
</dbReference>
<dbReference type="InterPro" id="IPR005864">
    <property type="entry name" value="ATP_synth_F0_bsu_bac"/>
</dbReference>
<dbReference type="InterPro" id="IPR050059">
    <property type="entry name" value="ATP_synthase_B_chain"/>
</dbReference>
<dbReference type="NCBIfam" id="TIGR01144">
    <property type="entry name" value="ATP_synt_b"/>
    <property type="match status" value="1"/>
</dbReference>
<dbReference type="PANTHER" id="PTHR33445:SF1">
    <property type="entry name" value="ATP SYNTHASE SUBUNIT B"/>
    <property type="match status" value="1"/>
</dbReference>
<dbReference type="PANTHER" id="PTHR33445">
    <property type="entry name" value="ATP SYNTHASE SUBUNIT B', CHLOROPLASTIC"/>
    <property type="match status" value="1"/>
</dbReference>
<dbReference type="Pfam" id="PF00430">
    <property type="entry name" value="ATP-synt_B"/>
    <property type="match status" value="1"/>
</dbReference>
<dbReference type="SUPFAM" id="SSF81573">
    <property type="entry name" value="F1F0 ATP synthase subunit B, membrane domain"/>
    <property type="match status" value="1"/>
</dbReference>
<gene>
    <name evidence="1" type="primary">atpF</name>
    <name type="ordered locus">SPCG_1496</name>
</gene>
<reference key="1">
    <citation type="journal article" date="2009" name="BMC Genomics">
        <title>Genome evolution driven by host adaptations results in a more virulent and antimicrobial-resistant Streptococcus pneumoniae serotype 14.</title>
        <authorList>
            <person name="Ding F."/>
            <person name="Tang P."/>
            <person name="Hsu M.-H."/>
            <person name="Cui P."/>
            <person name="Hu S."/>
            <person name="Yu J."/>
            <person name="Chiu C.-H."/>
        </authorList>
    </citation>
    <scope>NUCLEOTIDE SEQUENCE [LARGE SCALE GENOMIC DNA]</scope>
    <source>
        <strain>CGSP14</strain>
    </source>
</reference>
<accession>B2IQX4</accession>
<sequence>MHVTVGELIGNFILITGSFILLLVLIKKFAWSNITGIFEERAEKIASDIDRAEEARQKAEVLAQKREDELAGSRKEAKTIIENAKETAEQSKANILADAKLEAGHLKEKANQEIAQNKVEALQSVKGEVADLTISLAGKIISQNLDSHAHKALIDQYIDQLGEA</sequence>
<name>ATPF_STRPS</name>
<comment type="function">
    <text evidence="1">F(1)F(0) ATP synthase produces ATP from ADP in the presence of a proton or sodium gradient. F-type ATPases consist of two structural domains, F(1) containing the extramembraneous catalytic core and F(0) containing the membrane proton channel, linked together by a central stalk and a peripheral stalk. During catalysis, ATP synthesis in the catalytic domain of F(1) is coupled via a rotary mechanism of the central stalk subunits to proton translocation.</text>
</comment>
<comment type="function">
    <text evidence="1">Component of the F(0) channel, it forms part of the peripheral stalk, linking F(1) to F(0).</text>
</comment>
<comment type="subunit">
    <text evidence="1">F-type ATPases have 2 components, F(1) - the catalytic core - and F(0) - the membrane proton channel. F(1) has five subunits: alpha(3), beta(3), gamma(1), delta(1), epsilon(1). F(0) has three main subunits: a(1), b(2) and c(10-14). The alpha and beta chains form an alternating ring which encloses part of the gamma chain. F(1) is attached to F(0) by a central stalk formed by the gamma and epsilon chains, while a peripheral stalk is formed by the delta and b chains.</text>
</comment>
<comment type="subcellular location">
    <subcellularLocation>
        <location evidence="1">Cell membrane</location>
        <topology evidence="1">Single-pass membrane protein</topology>
    </subcellularLocation>
</comment>
<comment type="similarity">
    <text evidence="1">Belongs to the ATPase B chain family.</text>
</comment>